<protein>
    <recommendedName>
        <fullName>Isoamyl acetate-hydrolyzing esterase 1 homolog</fullName>
        <ecNumber>3.1.-.-</ecNumber>
    </recommendedName>
</protein>
<evidence type="ECO:0000250" key="1"/>
<evidence type="ECO:0000250" key="2">
    <source>
        <dbReference type="UniProtKB" id="P41734"/>
    </source>
</evidence>
<evidence type="ECO:0000250" key="3">
    <source>
        <dbReference type="UniProtKB" id="Q9DB29"/>
    </source>
</evidence>
<evidence type="ECO:0000305" key="4"/>
<name>IAH1_BOVIN</name>
<gene>
    <name type="primary">IAH1</name>
</gene>
<feature type="chain" id="PRO_0000315722" description="Isoamyl acetate-hydrolyzing esterase 1 homolog">
    <location>
        <begin position="1"/>
        <end position="249"/>
    </location>
</feature>
<feature type="active site" description="Nucleophile" evidence="2">
    <location>
        <position position="24"/>
    </location>
</feature>
<feature type="active site" description="Proton donor" evidence="2">
    <location>
        <position position="197"/>
    </location>
</feature>
<feature type="active site" description="Proton acceptor" evidence="2">
    <location>
        <position position="200"/>
    </location>
</feature>
<feature type="site" description="Transition state stabilizer" evidence="2">
    <location>
        <position position="56"/>
    </location>
</feature>
<feature type="site" description="Transition state stabilizer" evidence="2">
    <location>
        <position position="89"/>
    </location>
</feature>
<feature type="modified residue" description="N6-succinyllysine" evidence="3">
    <location>
        <position position="63"/>
    </location>
</feature>
<organism>
    <name type="scientific">Bos taurus</name>
    <name type="common">Bovine</name>
    <dbReference type="NCBI Taxonomy" id="9913"/>
    <lineage>
        <taxon>Eukaryota</taxon>
        <taxon>Metazoa</taxon>
        <taxon>Chordata</taxon>
        <taxon>Craniata</taxon>
        <taxon>Vertebrata</taxon>
        <taxon>Euteleostomi</taxon>
        <taxon>Mammalia</taxon>
        <taxon>Eutheria</taxon>
        <taxon>Laurasiatheria</taxon>
        <taxon>Artiodactyla</taxon>
        <taxon>Ruminantia</taxon>
        <taxon>Pecora</taxon>
        <taxon>Bovidae</taxon>
        <taxon>Bovinae</taxon>
        <taxon>Bos</taxon>
    </lineage>
</organism>
<accession>Q3SZ16</accession>
<reference key="1">
    <citation type="submission" date="2005-08" db="EMBL/GenBank/DDBJ databases">
        <authorList>
            <consortium name="NIH - Mammalian Gene Collection (MGC) project"/>
        </authorList>
    </citation>
    <scope>NUCLEOTIDE SEQUENCE [LARGE SCALE MRNA]</scope>
    <source>
        <strain>Hereford</strain>
        <tissue>Fetal liver</tissue>
    </source>
</reference>
<keyword id="KW-0378">Hydrolase</keyword>
<keyword id="KW-0442">Lipid degradation</keyword>
<keyword id="KW-0443">Lipid metabolism</keyword>
<keyword id="KW-1185">Reference proteome</keyword>
<sequence length="249" mass="27579">MALCEAVASGSPLVWPRVLLFGDSITQFSFQQGGWGASLADMLVRKCDVLNRGFSGYNTRWAKIILPRLVRKGSGLDSPVAVTIFFGANDSALKDENPKQHVPLEEFVANLRSMVRYLRSVDVPEGRLILITPPPLCEAAWAQECLQQGCKLNRLNSVVGEYARACLQVAQDCGADALDLWSLMQKDGQDFSSYLSDGLHLSPKGNEFVFSHLWPLIEKKVSSLPFLLPYWRDIAEARPELSLLGDGDH</sequence>
<dbReference type="EC" id="3.1.-.-"/>
<dbReference type="EMBL" id="BC103252">
    <property type="protein sequence ID" value="AAI03253.1"/>
    <property type="molecule type" value="mRNA"/>
</dbReference>
<dbReference type="RefSeq" id="NP_001029930.1">
    <property type="nucleotide sequence ID" value="NM_001034758.1"/>
</dbReference>
<dbReference type="SMR" id="Q3SZ16"/>
<dbReference type="FunCoup" id="Q3SZ16">
    <property type="interactions" value="3552"/>
</dbReference>
<dbReference type="STRING" id="9913.ENSBTAP00000032777"/>
<dbReference type="PaxDb" id="9913-ENSBTAP00000032777"/>
<dbReference type="GeneID" id="614320"/>
<dbReference type="KEGG" id="bta:614320"/>
<dbReference type="CTD" id="285148"/>
<dbReference type="VEuPathDB" id="HostDB:ENSBTAG00000001140"/>
<dbReference type="eggNOG" id="KOG3035">
    <property type="taxonomic scope" value="Eukaryota"/>
</dbReference>
<dbReference type="HOGENOM" id="CLU_051989_0_2_1"/>
<dbReference type="InParanoid" id="Q3SZ16"/>
<dbReference type="OMA" id="VIWPKVI"/>
<dbReference type="OrthoDB" id="671439at2759"/>
<dbReference type="TreeFam" id="TF328918"/>
<dbReference type="Proteomes" id="UP000009136">
    <property type="component" value="Chromosome 11"/>
</dbReference>
<dbReference type="Bgee" id="ENSBTAG00000001140">
    <property type="expression patterns" value="Expressed in cortex of kidney and 108 other cell types or tissues"/>
</dbReference>
<dbReference type="GO" id="GO:0016788">
    <property type="term" value="F:hydrolase activity, acting on ester bonds"/>
    <property type="evidence" value="ECO:0007669"/>
    <property type="project" value="InterPro"/>
</dbReference>
<dbReference type="GO" id="GO:0016042">
    <property type="term" value="P:lipid catabolic process"/>
    <property type="evidence" value="ECO:0007669"/>
    <property type="project" value="UniProtKB-KW"/>
</dbReference>
<dbReference type="CDD" id="cd01838">
    <property type="entry name" value="Isoamyl_acetate_hydrolase_like"/>
    <property type="match status" value="1"/>
</dbReference>
<dbReference type="FunFam" id="3.40.50.1110:FF:000002">
    <property type="entry name" value="isoamyl acetate-hydrolyzing esterase 1 homolog"/>
    <property type="match status" value="1"/>
</dbReference>
<dbReference type="Gene3D" id="3.40.50.1110">
    <property type="entry name" value="SGNH hydrolase"/>
    <property type="match status" value="1"/>
</dbReference>
<dbReference type="InterPro" id="IPR001087">
    <property type="entry name" value="GDSL"/>
</dbReference>
<dbReference type="InterPro" id="IPR045136">
    <property type="entry name" value="Iah1-like"/>
</dbReference>
<dbReference type="InterPro" id="IPR036514">
    <property type="entry name" value="SGNH_hydro_sf"/>
</dbReference>
<dbReference type="PANTHER" id="PTHR14209">
    <property type="entry name" value="ISOAMYL ACETATE-HYDROLYZING ESTERASE 1"/>
    <property type="match status" value="1"/>
</dbReference>
<dbReference type="PANTHER" id="PTHR14209:SF19">
    <property type="entry name" value="ISOAMYL ACETATE-HYDROLYZING ESTERASE 1 HOMOLOG"/>
    <property type="match status" value="1"/>
</dbReference>
<dbReference type="Pfam" id="PF00657">
    <property type="entry name" value="Lipase_GDSL"/>
    <property type="match status" value="1"/>
</dbReference>
<dbReference type="SUPFAM" id="SSF52266">
    <property type="entry name" value="SGNH hydrolase"/>
    <property type="match status" value="1"/>
</dbReference>
<proteinExistence type="evidence at transcript level"/>
<comment type="function">
    <text evidence="1">Probable lipase.</text>
</comment>
<comment type="similarity">
    <text evidence="4">Belongs to the 'GDSL' lipolytic enzyme family. IAH1 subfamily.</text>
</comment>